<keyword id="KW-0067">ATP-binding</keyword>
<keyword id="KW-0418">Kinase</keyword>
<keyword id="KW-0460">Magnesium</keyword>
<keyword id="KW-0479">Metal-binding</keyword>
<keyword id="KW-0547">Nucleotide-binding</keyword>
<keyword id="KW-0784">Thiamine biosynthesis</keyword>
<keyword id="KW-0808">Transferase</keyword>
<reference key="1">
    <citation type="journal article" date="2009" name="J. Bacteriol.">
        <title>Complete genome sequence of the extremophilic Bacillus cereus strain Q1 with industrial applications.</title>
        <authorList>
            <person name="Xiong Z."/>
            <person name="Jiang Y."/>
            <person name="Qi D."/>
            <person name="Lu H."/>
            <person name="Yang F."/>
            <person name="Yang J."/>
            <person name="Chen L."/>
            <person name="Sun L."/>
            <person name="Xu X."/>
            <person name="Xue Y."/>
            <person name="Zhu Y."/>
            <person name="Jin Q."/>
        </authorList>
    </citation>
    <scope>NUCLEOTIDE SEQUENCE [LARGE SCALE GENOMIC DNA]</scope>
    <source>
        <strain>Q1</strain>
    </source>
</reference>
<comment type="function">
    <text evidence="1">Catalyzes the phosphorylation of the hydroxyl group of 4-methyl-5-beta-hydroxyethylthiazole (THZ).</text>
</comment>
<comment type="catalytic activity">
    <reaction evidence="1">
        <text>5-(2-hydroxyethyl)-4-methylthiazole + ATP = 4-methyl-5-(2-phosphooxyethyl)-thiazole + ADP + H(+)</text>
        <dbReference type="Rhea" id="RHEA:24212"/>
        <dbReference type="ChEBI" id="CHEBI:15378"/>
        <dbReference type="ChEBI" id="CHEBI:17957"/>
        <dbReference type="ChEBI" id="CHEBI:30616"/>
        <dbReference type="ChEBI" id="CHEBI:58296"/>
        <dbReference type="ChEBI" id="CHEBI:456216"/>
        <dbReference type="EC" id="2.7.1.50"/>
    </reaction>
</comment>
<comment type="cofactor">
    <cofactor evidence="1">
        <name>Mg(2+)</name>
        <dbReference type="ChEBI" id="CHEBI:18420"/>
    </cofactor>
</comment>
<comment type="pathway">
    <text evidence="1">Cofactor biosynthesis; thiamine diphosphate biosynthesis; 4-methyl-5-(2-phosphoethyl)-thiazole from 5-(2-hydroxyethyl)-4-methylthiazole: step 1/1.</text>
</comment>
<comment type="similarity">
    <text evidence="1">Belongs to the Thz kinase family.</text>
</comment>
<accession>B9J2L4</accession>
<sequence>MNRKEISKVVDLVRESNPLVHNITNVVVTNFTANGLLALGASPVMAYAKEEVAEMASIAGALVLNMGTLRPEEVEAMLLAGKSANVNNVPVLFDPVGAGATSYRTEVARHIPAEIELAIIRGNAAEIANVINERWEIKGVDAGAGNGNVVSIAKQAADELNTVAVITGKEDVVTDGQRTIVIRNGHPILTKVTGTGCLLTSVIGAFVAVEKDYVKAAVAALTFYGVAAELAAAKTVEKGPGSFQIEFLNQLANTTSGDIEKYGEIEVI</sequence>
<proteinExistence type="inferred from homology"/>
<gene>
    <name evidence="1" type="primary">thiM</name>
    <name type="ordered locus">BCQ_0461</name>
</gene>
<organism>
    <name type="scientific">Bacillus cereus (strain Q1)</name>
    <dbReference type="NCBI Taxonomy" id="361100"/>
    <lineage>
        <taxon>Bacteria</taxon>
        <taxon>Bacillati</taxon>
        <taxon>Bacillota</taxon>
        <taxon>Bacilli</taxon>
        <taxon>Bacillales</taxon>
        <taxon>Bacillaceae</taxon>
        <taxon>Bacillus</taxon>
        <taxon>Bacillus cereus group</taxon>
    </lineage>
</organism>
<evidence type="ECO:0000255" key="1">
    <source>
        <dbReference type="HAMAP-Rule" id="MF_00228"/>
    </source>
</evidence>
<feature type="chain" id="PRO_1000198109" description="Hydroxyethylthiazole kinase">
    <location>
        <begin position="1"/>
        <end position="268"/>
    </location>
</feature>
<feature type="binding site" evidence="1">
    <location>
        <position position="45"/>
    </location>
    <ligand>
        <name>substrate</name>
    </ligand>
</feature>
<feature type="binding site" evidence="1">
    <location>
        <position position="121"/>
    </location>
    <ligand>
        <name>ATP</name>
        <dbReference type="ChEBI" id="CHEBI:30616"/>
    </ligand>
</feature>
<feature type="binding site" evidence="1">
    <location>
        <position position="167"/>
    </location>
    <ligand>
        <name>ATP</name>
        <dbReference type="ChEBI" id="CHEBI:30616"/>
    </ligand>
</feature>
<feature type="binding site" evidence="1">
    <location>
        <position position="194"/>
    </location>
    <ligand>
        <name>substrate</name>
    </ligand>
</feature>
<name>THIM_BACCQ</name>
<protein>
    <recommendedName>
        <fullName evidence="1">Hydroxyethylthiazole kinase</fullName>
        <ecNumber evidence="1">2.7.1.50</ecNumber>
    </recommendedName>
    <alternativeName>
        <fullName evidence="1">4-methyl-5-beta-hydroxyethylthiazole kinase</fullName>
        <shortName evidence="1">TH kinase</shortName>
        <shortName evidence="1">Thz kinase</shortName>
    </alternativeName>
</protein>
<dbReference type="EC" id="2.7.1.50" evidence="1"/>
<dbReference type="EMBL" id="CP000227">
    <property type="protein sequence ID" value="ACM10933.1"/>
    <property type="molecule type" value="Genomic_DNA"/>
</dbReference>
<dbReference type="SMR" id="B9J2L4"/>
<dbReference type="KEGG" id="bcq:BCQ_0461"/>
<dbReference type="HOGENOM" id="CLU_019943_0_1_9"/>
<dbReference type="UniPathway" id="UPA00060">
    <property type="reaction ID" value="UER00139"/>
</dbReference>
<dbReference type="Proteomes" id="UP000000441">
    <property type="component" value="Chromosome"/>
</dbReference>
<dbReference type="GO" id="GO:0005524">
    <property type="term" value="F:ATP binding"/>
    <property type="evidence" value="ECO:0007669"/>
    <property type="project" value="UniProtKB-UniRule"/>
</dbReference>
<dbReference type="GO" id="GO:0004417">
    <property type="term" value="F:hydroxyethylthiazole kinase activity"/>
    <property type="evidence" value="ECO:0007669"/>
    <property type="project" value="UniProtKB-UniRule"/>
</dbReference>
<dbReference type="GO" id="GO:0000287">
    <property type="term" value="F:magnesium ion binding"/>
    <property type="evidence" value="ECO:0007669"/>
    <property type="project" value="UniProtKB-UniRule"/>
</dbReference>
<dbReference type="GO" id="GO:0009228">
    <property type="term" value="P:thiamine biosynthetic process"/>
    <property type="evidence" value="ECO:0007669"/>
    <property type="project" value="UniProtKB-KW"/>
</dbReference>
<dbReference type="GO" id="GO:0009229">
    <property type="term" value="P:thiamine diphosphate biosynthetic process"/>
    <property type="evidence" value="ECO:0007669"/>
    <property type="project" value="UniProtKB-UniRule"/>
</dbReference>
<dbReference type="CDD" id="cd01170">
    <property type="entry name" value="THZ_kinase"/>
    <property type="match status" value="1"/>
</dbReference>
<dbReference type="FunFam" id="3.40.1190.20:FF:000027">
    <property type="entry name" value="Hydroxyethylthiazole kinase"/>
    <property type="match status" value="1"/>
</dbReference>
<dbReference type="Gene3D" id="3.40.1190.20">
    <property type="match status" value="1"/>
</dbReference>
<dbReference type="HAMAP" id="MF_00228">
    <property type="entry name" value="Thz_kinase"/>
    <property type="match status" value="1"/>
</dbReference>
<dbReference type="InterPro" id="IPR000417">
    <property type="entry name" value="Hyethyz_kinase"/>
</dbReference>
<dbReference type="InterPro" id="IPR029056">
    <property type="entry name" value="Ribokinase-like"/>
</dbReference>
<dbReference type="NCBIfam" id="NF006830">
    <property type="entry name" value="PRK09355.1"/>
    <property type="match status" value="1"/>
</dbReference>
<dbReference type="NCBIfam" id="TIGR00694">
    <property type="entry name" value="thiM"/>
    <property type="match status" value="1"/>
</dbReference>
<dbReference type="Pfam" id="PF02110">
    <property type="entry name" value="HK"/>
    <property type="match status" value="1"/>
</dbReference>
<dbReference type="PIRSF" id="PIRSF000513">
    <property type="entry name" value="Thz_kinase"/>
    <property type="match status" value="1"/>
</dbReference>
<dbReference type="PRINTS" id="PR01099">
    <property type="entry name" value="HYETHTZKNASE"/>
</dbReference>
<dbReference type="SUPFAM" id="SSF53613">
    <property type="entry name" value="Ribokinase-like"/>
    <property type="match status" value="1"/>
</dbReference>